<sequence>MIPGGGQPNMQQLLQQAQKMQQDLAAAQEELARTEVDGQAGGGLVKATVTGSGELRALVIDPKAVDPEDTETLADLVVAAVQAANENAQALQQEKLGPLAQGLGGGGGIPGLPF</sequence>
<evidence type="ECO:0000255" key="1">
    <source>
        <dbReference type="HAMAP-Rule" id="MF_00274"/>
    </source>
</evidence>
<feature type="chain" id="PRO_1000114651" description="Nucleoid-associated protein SGR_3378">
    <location>
        <begin position="1"/>
        <end position="114"/>
    </location>
</feature>
<keyword id="KW-0963">Cytoplasm</keyword>
<keyword id="KW-0238">DNA-binding</keyword>
<gene>
    <name type="ordered locus">SGR_3378</name>
</gene>
<comment type="function">
    <text evidence="1">Binds to DNA and alters its conformation. May be involved in regulation of gene expression, nucleoid organization and DNA protection.</text>
</comment>
<comment type="subunit">
    <text evidence="1">Homodimer.</text>
</comment>
<comment type="subcellular location">
    <subcellularLocation>
        <location evidence="1">Cytoplasm</location>
        <location evidence="1">Nucleoid</location>
    </subcellularLocation>
</comment>
<comment type="similarity">
    <text evidence="1">Belongs to the YbaB/EbfC family.</text>
</comment>
<protein>
    <recommendedName>
        <fullName evidence="1">Nucleoid-associated protein SGR_3378</fullName>
    </recommendedName>
</protein>
<dbReference type="EMBL" id="AP009493">
    <property type="protein sequence ID" value="BAG20207.1"/>
    <property type="molecule type" value="Genomic_DNA"/>
</dbReference>
<dbReference type="RefSeq" id="WP_003967515.1">
    <property type="nucleotide sequence ID" value="NC_010572.1"/>
</dbReference>
<dbReference type="SMR" id="B1VM97"/>
<dbReference type="KEGG" id="sgr:SGR_3378"/>
<dbReference type="eggNOG" id="COG0718">
    <property type="taxonomic scope" value="Bacteria"/>
</dbReference>
<dbReference type="HOGENOM" id="CLU_140930_4_0_11"/>
<dbReference type="Proteomes" id="UP000001685">
    <property type="component" value="Chromosome"/>
</dbReference>
<dbReference type="GO" id="GO:0043590">
    <property type="term" value="C:bacterial nucleoid"/>
    <property type="evidence" value="ECO:0007669"/>
    <property type="project" value="UniProtKB-UniRule"/>
</dbReference>
<dbReference type="GO" id="GO:0005829">
    <property type="term" value="C:cytosol"/>
    <property type="evidence" value="ECO:0007669"/>
    <property type="project" value="TreeGrafter"/>
</dbReference>
<dbReference type="GO" id="GO:0003677">
    <property type="term" value="F:DNA binding"/>
    <property type="evidence" value="ECO:0007669"/>
    <property type="project" value="UniProtKB-UniRule"/>
</dbReference>
<dbReference type="FunFam" id="3.30.1310.10:FF:000003">
    <property type="entry name" value="Nucleoid-associated protein MRA_3753"/>
    <property type="match status" value="1"/>
</dbReference>
<dbReference type="Gene3D" id="3.30.1310.10">
    <property type="entry name" value="Nucleoid-associated protein YbaB-like domain"/>
    <property type="match status" value="1"/>
</dbReference>
<dbReference type="HAMAP" id="MF_00274">
    <property type="entry name" value="DNA_YbaB_EbfC"/>
    <property type="match status" value="1"/>
</dbReference>
<dbReference type="InterPro" id="IPR036894">
    <property type="entry name" value="YbaB-like_sf"/>
</dbReference>
<dbReference type="InterPro" id="IPR004401">
    <property type="entry name" value="YbaB/EbfC"/>
</dbReference>
<dbReference type="NCBIfam" id="TIGR00103">
    <property type="entry name" value="DNA_YbaB_EbfC"/>
    <property type="match status" value="1"/>
</dbReference>
<dbReference type="PANTHER" id="PTHR33449">
    <property type="entry name" value="NUCLEOID-ASSOCIATED PROTEIN YBAB"/>
    <property type="match status" value="1"/>
</dbReference>
<dbReference type="PANTHER" id="PTHR33449:SF1">
    <property type="entry name" value="NUCLEOID-ASSOCIATED PROTEIN YBAB"/>
    <property type="match status" value="1"/>
</dbReference>
<dbReference type="Pfam" id="PF02575">
    <property type="entry name" value="YbaB_DNA_bd"/>
    <property type="match status" value="1"/>
</dbReference>
<dbReference type="PIRSF" id="PIRSF004555">
    <property type="entry name" value="UCP004555"/>
    <property type="match status" value="1"/>
</dbReference>
<dbReference type="SUPFAM" id="SSF82607">
    <property type="entry name" value="YbaB-like"/>
    <property type="match status" value="1"/>
</dbReference>
<accession>B1VM97</accession>
<proteinExistence type="inferred from homology"/>
<organism>
    <name type="scientific">Streptomyces griseus subsp. griseus (strain JCM 4626 / CBS 651.72 / NBRC 13350 / KCC S-0626 / ISP 5235)</name>
    <dbReference type="NCBI Taxonomy" id="455632"/>
    <lineage>
        <taxon>Bacteria</taxon>
        <taxon>Bacillati</taxon>
        <taxon>Actinomycetota</taxon>
        <taxon>Actinomycetes</taxon>
        <taxon>Kitasatosporales</taxon>
        <taxon>Streptomycetaceae</taxon>
        <taxon>Streptomyces</taxon>
    </lineage>
</organism>
<name>Y3378_STRGG</name>
<reference key="1">
    <citation type="journal article" date="2008" name="J. Bacteriol.">
        <title>Genome sequence of the streptomycin-producing microorganism Streptomyces griseus IFO 13350.</title>
        <authorList>
            <person name="Ohnishi Y."/>
            <person name="Ishikawa J."/>
            <person name="Hara H."/>
            <person name="Suzuki H."/>
            <person name="Ikenoya M."/>
            <person name="Ikeda H."/>
            <person name="Yamashita A."/>
            <person name="Hattori M."/>
            <person name="Horinouchi S."/>
        </authorList>
    </citation>
    <scope>NUCLEOTIDE SEQUENCE [LARGE SCALE GENOMIC DNA]</scope>
    <source>
        <strain>JCM 4626 / CBS 651.72 / NBRC 13350 / KCC S-0626 / ISP 5235</strain>
    </source>
</reference>